<dbReference type="EC" id="2.7.1.87"/>
<dbReference type="EMBL" id="U00004">
    <property type="protein sequence ID" value="AAA73392.1"/>
    <property type="molecule type" value="Unassigned_DNA"/>
</dbReference>
<dbReference type="EMBL" id="X01702">
    <property type="protein sequence ID" value="CAA25854.1"/>
    <property type="molecule type" value="Genomic_DNA"/>
</dbReference>
<dbReference type="SMR" id="P13082"/>
<dbReference type="CARD" id="ARO:3002659">
    <property type="molecule name" value="APH(6)-Ic"/>
    <property type="mechanism identifier" value="ARO:0001004"/>
    <property type="mechanism name" value="antibiotic inactivation"/>
</dbReference>
<dbReference type="KEGG" id="ag:CAA25854"/>
<dbReference type="GO" id="GO:0005524">
    <property type="term" value="F:ATP binding"/>
    <property type="evidence" value="ECO:0007669"/>
    <property type="project" value="UniProtKB-KW"/>
</dbReference>
<dbReference type="GO" id="GO:0050299">
    <property type="term" value="F:streptomycin 3''-kinase activity"/>
    <property type="evidence" value="ECO:0007669"/>
    <property type="project" value="UniProtKB-EC"/>
</dbReference>
<dbReference type="GO" id="GO:0046677">
    <property type="term" value="P:response to antibiotic"/>
    <property type="evidence" value="ECO:0007669"/>
    <property type="project" value="UniProtKB-KW"/>
</dbReference>
<dbReference type="GO" id="GO:0019748">
    <property type="term" value="P:secondary metabolic process"/>
    <property type="evidence" value="ECO:0007669"/>
    <property type="project" value="InterPro"/>
</dbReference>
<dbReference type="InterPro" id="IPR011009">
    <property type="entry name" value="Kinase-like_dom_sf"/>
</dbReference>
<dbReference type="InterPro" id="IPR006748">
    <property type="entry name" value="NH2Glyco/OHUrea_AB-resist_kin"/>
</dbReference>
<dbReference type="NCBIfam" id="NF012171">
    <property type="entry name" value="APH_6"/>
    <property type="match status" value="1"/>
</dbReference>
<dbReference type="NCBIfam" id="NF000011">
    <property type="entry name" value="APH_6_Ic"/>
    <property type="match status" value="1"/>
</dbReference>
<dbReference type="NCBIfam" id="NF033614">
    <property type="entry name" value="APH_6_Ic_gen"/>
    <property type="match status" value="1"/>
</dbReference>
<dbReference type="Pfam" id="PF04655">
    <property type="entry name" value="APH_6_hur"/>
    <property type="match status" value="1"/>
</dbReference>
<dbReference type="SUPFAM" id="SSF56112">
    <property type="entry name" value="Protein kinase-like (PK-like)"/>
    <property type="match status" value="1"/>
</dbReference>
<comment type="function">
    <text>The aminoglycoside phosphotransferases achieve inactivation of their antibiotic substrates by phosphorylation.</text>
</comment>
<comment type="catalytic activity">
    <reaction>
        <text>streptomycin + ATP = streptomycin 3''-phosphate + ADP + H(+)</text>
        <dbReference type="Rhea" id="RHEA:18377"/>
        <dbReference type="ChEBI" id="CHEBI:15378"/>
        <dbReference type="ChEBI" id="CHEBI:30616"/>
        <dbReference type="ChEBI" id="CHEBI:57482"/>
        <dbReference type="ChEBI" id="CHEBI:58007"/>
        <dbReference type="ChEBI" id="CHEBI:456216"/>
        <dbReference type="EC" id="2.7.1.87"/>
    </reaction>
</comment>
<comment type="miscellaneous">
    <text>This enzyme is encoded by the kanamycin and neomycin resistance transposon Tn5.</text>
</comment>
<comment type="similarity">
    <text evidence="2">Belongs to the aminoglycoside phosphotransferase family.</text>
</comment>
<feature type="chain" id="PRO_0000204814" description="Streptomycin 3''-kinase">
    <location>
        <begin position="1"/>
        <end position="266"/>
    </location>
</feature>
<feature type="active site" description="Proton acceptor" evidence="1">
    <location>
        <position position="154"/>
    </location>
</feature>
<protein>
    <recommendedName>
        <fullName>Streptomycin 3''-kinase</fullName>
        <ecNumber>2.7.1.87</ecNumber>
    </recommendedName>
    <alternativeName>
        <fullName>Streptomycin 3''-phosphotransferase</fullName>
        <shortName>SPH</shortName>
    </alternativeName>
</protein>
<reference key="1">
    <citation type="journal article" date="1985" name="Nucleic Acids Res.">
        <title>Completion of the nucleotide sequence of the central region of Tn5 confirms the presence of three resistance genes.</title>
        <authorList>
            <person name="Mazodier P."/>
            <person name="Cossart P."/>
            <person name="Giraud E."/>
            <person name="Gasser F."/>
        </authorList>
    </citation>
    <scope>NUCLEOTIDE SEQUENCE [GENOMIC DNA]</scope>
</reference>
<keyword id="KW-0046">Antibiotic resistance</keyword>
<keyword id="KW-0067">ATP-binding</keyword>
<keyword id="KW-0418">Kinase</keyword>
<keyword id="KW-0547">Nucleotide-binding</keyword>
<keyword id="KW-0808">Transferase</keyword>
<keyword id="KW-0814">Transposable element</keyword>
<proteinExistence type="inferred from homology"/>
<accession>P13082</accession>
<organism>
    <name type="scientific">Klebsiella pneumoniae</name>
    <dbReference type="NCBI Taxonomy" id="573"/>
    <lineage>
        <taxon>Bacteria</taxon>
        <taxon>Pseudomonadati</taxon>
        <taxon>Pseudomonadota</taxon>
        <taxon>Gammaproteobacteria</taxon>
        <taxon>Enterobacterales</taxon>
        <taxon>Enterobacteriaceae</taxon>
        <taxon>Klebsiella/Raoultella group</taxon>
        <taxon>Klebsiella</taxon>
        <taxon>Klebsiella pneumoniae complex</taxon>
    </lineage>
</organism>
<sequence>MERWRLLRDGELLTTHSSWILPVRQGDMPAMLKVARIPDEEAGYRLLTWWDGQGAARVFASAAGALLMERASGAGDLAQIAWSGQDDEACRILCDTAARLHAPRSGPPPDLHPLQEWFQPLFRLAAEHAALAPAASVARQLLAAPREVCPLHGDLHHENVLDFGDRGWLAIDPHGLLGERTFDYANIFTNPDLSDPGRPLAILPGRLEARLSIVVATTGFEPERLLRWIIAWTGLSAAWFIGDGDGEGEGAAIDLAVNAMARRLLD</sequence>
<gene>
    <name type="primary">str</name>
</gene>
<name>STR_KLEPN</name>
<evidence type="ECO:0000250" key="1"/>
<evidence type="ECO:0000305" key="2"/>